<keyword id="KW-0067">ATP-binding</keyword>
<keyword id="KW-0963">Cytoplasm</keyword>
<keyword id="KW-0235">DNA replication</keyword>
<keyword id="KW-0238">DNA-binding</keyword>
<keyword id="KW-0446">Lipid-binding</keyword>
<keyword id="KW-0547">Nucleotide-binding</keyword>
<evidence type="ECO:0000255" key="1">
    <source>
        <dbReference type="HAMAP-Rule" id="MF_00377"/>
    </source>
</evidence>
<comment type="function">
    <text evidence="1">Plays an essential role in the initiation and regulation of chromosomal replication. ATP-DnaA binds to the origin of replication (oriC) to initiate formation of the DNA replication initiation complex once per cell cycle. Binds the DnaA box (a 9 base pair repeat at the origin) and separates the double-stranded (ds)DNA. Forms a right-handed helical filament on oriC DNA; dsDNA binds to the exterior of the filament while single-stranded (ss)DNA is stabiized in the filament's interior. The ATP-DnaA-oriC complex binds and stabilizes one strand of the AT-rich DNA unwinding element (DUE), permitting loading of DNA polymerase. After initiation quickly degrades to an ADP-DnaA complex that is not apt for DNA replication. Binds acidic phospholipids.</text>
</comment>
<comment type="subunit">
    <text evidence="1">Oligomerizes as a right-handed, spiral filament on DNA at oriC.</text>
</comment>
<comment type="subcellular location">
    <subcellularLocation>
        <location evidence="1">Cytoplasm</location>
    </subcellularLocation>
</comment>
<comment type="domain">
    <text evidence="1">Domain I is involved in oligomerization and binding regulators, domain II is flexibile and of varying length in different bacteria, domain III forms the AAA+ region, while domain IV binds dsDNA.</text>
</comment>
<comment type="similarity">
    <text evidence="1">Belongs to the DnaA family.</text>
</comment>
<gene>
    <name evidence="1" type="primary">dnaA</name>
    <name type="ordered locus">KPK_0001</name>
</gene>
<feature type="chain" id="PRO_1000121989" description="Chromosomal replication initiator protein DnaA">
    <location>
        <begin position="1"/>
        <end position="467"/>
    </location>
</feature>
<feature type="region of interest" description="Domain I, interacts with DnaA modulators" evidence="1">
    <location>
        <begin position="1"/>
        <end position="85"/>
    </location>
</feature>
<feature type="region of interest" description="Domain II" evidence="1">
    <location>
        <begin position="85"/>
        <end position="130"/>
    </location>
</feature>
<feature type="region of interest" description="Domain III, AAA+ region" evidence="1">
    <location>
        <begin position="131"/>
        <end position="347"/>
    </location>
</feature>
<feature type="region of interest" description="Domain IV, binds dsDNA" evidence="1">
    <location>
        <begin position="348"/>
        <end position="467"/>
    </location>
</feature>
<feature type="binding site" evidence="1">
    <location>
        <position position="175"/>
    </location>
    <ligand>
        <name>ATP</name>
        <dbReference type="ChEBI" id="CHEBI:30616"/>
    </ligand>
</feature>
<feature type="binding site" evidence="1">
    <location>
        <position position="177"/>
    </location>
    <ligand>
        <name>ATP</name>
        <dbReference type="ChEBI" id="CHEBI:30616"/>
    </ligand>
</feature>
<feature type="binding site" evidence="1">
    <location>
        <position position="178"/>
    </location>
    <ligand>
        <name>ATP</name>
        <dbReference type="ChEBI" id="CHEBI:30616"/>
    </ligand>
</feature>
<feature type="binding site" evidence="1">
    <location>
        <position position="179"/>
    </location>
    <ligand>
        <name>ATP</name>
        <dbReference type="ChEBI" id="CHEBI:30616"/>
    </ligand>
</feature>
<name>DNAA_KLEP3</name>
<accession>B5XT51</accession>
<organism>
    <name type="scientific">Klebsiella pneumoniae (strain 342)</name>
    <dbReference type="NCBI Taxonomy" id="507522"/>
    <lineage>
        <taxon>Bacteria</taxon>
        <taxon>Pseudomonadati</taxon>
        <taxon>Pseudomonadota</taxon>
        <taxon>Gammaproteobacteria</taxon>
        <taxon>Enterobacterales</taxon>
        <taxon>Enterobacteriaceae</taxon>
        <taxon>Klebsiella/Raoultella group</taxon>
        <taxon>Klebsiella</taxon>
        <taxon>Klebsiella pneumoniae complex</taxon>
    </lineage>
</organism>
<protein>
    <recommendedName>
        <fullName evidence="1">Chromosomal replication initiator protein DnaA</fullName>
    </recommendedName>
</protein>
<sequence length="467" mass="52395">MSLSLWQQCLARLQDELPATEFSMWIRPLQAELSDNTLALYAPNRFVLDWVRDKYLNNINGLLNDFCGADAPQLRFEVGAKPASSLQKGAVSPAAAAIPAAQVQTARVAPTIVRPGWDNVPAPAEPTYRSNVNVKHTFDNFVEGKSNQLARAAARQVADNPGGAYNPLFLYGGTGLGKTHLLHAVGNGIVARKPNAKVVYMHSERFVQDMVKALQNNAIEEFKRYYRSVDALLIDDIQFFANKERSQEEFFHTFNALLEGNQQIILTSDRYPKEINGVEDRLKSRFGWGLTVAIEPPELETRVAILMKKADENDIRLPGEVAFFIAKRLRSNVRELEGALNRVIANANFTGRAITIDFVREALRDLLALQEKLVTIDNIQKTVAEYYKIKVADLLSKRRSRSVARPRQMAMALAKELTNHSLPEIGDAFGGRDHTTVLHACRKIEQLREESHDIKEDFSNLIRTLSS</sequence>
<dbReference type="EMBL" id="CP000964">
    <property type="protein sequence ID" value="ACI11822.1"/>
    <property type="molecule type" value="Genomic_DNA"/>
</dbReference>
<dbReference type="SMR" id="B5XT51"/>
<dbReference type="KEGG" id="kpe:KPK_0001"/>
<dbReference type="HOGENOM" id="CLU_026910_0_1_6"/>
<dbReference type="Proteomes" id="UP000001734">
    <property type="component" value="Chromosome"/>
</dbReference>
<dbReference type="GO" id="GO:0005737">
    <property type="term" value="C:cytoplasm"/>
    <property type="evidence" value="ECO:0007669"/>
    <property type="project" value="UniProtKB-SubCell"/>
</dbReference>
<dbReference type="GO" id="GO:0005886">
    <property type="term" value="C:plasma membrane"/>
    <property type="evidence" value="ECO:0007669"/>
    <property type="project" value="TreeGrafter"/>
</dbReference>
<dbReference type="GO" id="GO:0005524">
    <property type="term" value="F:ATP binding"/>
    <property type="evidence" value="ECO:0007669"/>
    <property type="project" value="UniProtKB-UniRule"/>
</dbReference>
<dbReference type="GO" id="GO:0016887">
    <property type="term" value="F:ATP hydrolysis activity"/>
    <property type="evidence" value="ECO:0007669"/>
    <property type="project" value="InterPro"/>
</dbReference>
<dbReference type="GO" id="GO:0003688">
    <property type="term" value="F:DNA replication origin binding"/>
    <property type="evidence" value="ECO:0007669"/>
    <property type="project" value="UniProtKB-UniRule"/>
</dbReference>
<dbReference type="GO" id="GO:0008289">
    <property type="term" value="F:lipid binding"/>
    <property type="evidence" value="ECO:0007669"/>
    <property type="project" value="UniProtKB-KW"/>
</dbReference>
<dbReference type="GO" id="GO:0006270">
    <property type="term" value="P:DNA replication initiation"/>
    <property type="evidence" value="ECO:0007669"/>
    <property type="project" value="UniProtKB-UniRule"/>
</dbReference>
<dbReference type="GO" id="GO:0006275">
    <property type="term" value="P:regulation of DNA replication"/>
    <property type="evidence" value="ECO:0007669"/>
    <property type="project" value="UniProtKB-UniRule"/>
</dbReference>
<dbReference type="CDD" id="cd00009">
    <property type="entry name" value="AAA"/>
    <property type="match status" value="1"/>
</dbReference>
<dbReference type="CDD" id="cd06571">
    <property type="entry name" value="Bac_DnaA_C"/>
    <property type="match status" value="1"/>
</dbReference>
<dbReference type="FunFam" id="1.10.1750.10:FF:000001">
    <property type="entry name" value="Chromosomal replication initiator protein DnaA"/>
    <property type="match status" value="1"/>
</dbReference>
<dbReference type="FunFam" id="1.10.8.60:FF:000003">
    <property type="entry name" value="Chromosomal replication initiator protein DnaA"/>
    <property type="match status" value="1"/>
</dbReference>
<dbReference type="FunFam" id="3.30.300.180:FF:000001">
    <property type="entry name" value="Chromosomal replication initiator protein DnaA"/>
    <property type="match status" value="1"/>
</dbReference>
<dbReference type="FunFam" id="3.40.50.300:FF:000103">
    <property type="entry name" value="Chromosomal replication initiator protein DnaA"/>
    <property type="match status" value="1"/>
</dbReference>
<dbReference type="Gene3D" id="1.10.1750.10">
    <property type="match status" value="1"/>
</dbReference>
<dbReference type="Gene3D" id="1.10.8.60">
    <property type="match status" value="1"/>
</dbReference>
<dbReference type="Gene3D" id="3.30.300.180">
    <property type="match status" value="1"/>
</dbReference>
<dbReference type="Gene3D" id="3.40.50.300">
    <property type="entry name" value="P-loop containing nucleotide triphosphate hydrolases"/>
    <property type="match status" value="1"/>
</dbReference>
<dbReference type="HAMAP" id="MF_00377">
    <property type="entry name" value="DnaA_bact"/>
    <property type="match status" value="1"/>
</dbReference>
<dbReference type="InterPro" id="IPR003593">
    <property type="entry name" value="AAA+_ATPase"/>
</dbReference>
<dbReference type="InterPro" id="IPR001957">
    <property type="entry name" value="Chromosome_initiator_DnaA"/>
</dbReference>
<dbReference type="InterPro" id="IPR020591">
    <property type="entry name" value="Chromosome_initiator_DnaA-like"/>
</dbReference>
<dbReference type="InterPro" id="IPR018312">
    <property type="entry name" value="Chromosome_initiator_DnaA_CS"/>
</dbReference>
<dbReference type="InterPro" id="IPR013159">
    <property type="entry name" value="DnaA_C"/>
</dbReference>
<dbReference type="InterPro" id="IPR013317">
    <property type="entry name" value="DnaA_dom"/>
</dbReference>
<dbReference type="InterPro" id="IPR024633">
    <property type="entry name" value="DnaA_N_dom"/>
</dbReference>
<dbReference type="InterPro" id="IPR038454">
    <property type="entry name" value="DnaA_N_sf"/>
</dbReference>
<dbReference type="InterPro" id="IPR027417">
    <property type="entry name" value="P-loop_NTPase"/>
</dbReference>
<dbReference type="InterPro" id="IPR010921">
    <property type="entry name" value="Trp_repressor/repl_initiator"/>
</dbReference>
<dbReference type="NCBIfam" id="TIGR00362">
    <property type="entry name" value="DnaA"/>
    <property type="match status" value="1"/>
</dbReference>
<dbReference type="PANTHER" id="PTHR30050">
    <property type="entry name" value="CHROMOSOMAL REPLICATION INITIATOR PROTEIN DNAA"/>
    <property type="match status" value="1"/>
</dbReference>
<dbReference type="PANTHER" id="PTHR30050:SF2">
    <property type="entry name" value="CHROMOSOMAL REPLICATION INITIATOR PROTEIN DNAA"/>
    <property type="match status" value="1"/>
</dbReference>
<dbReference type="Pfam" id="PF00308">
    <property type="entry name" value="Bac_DnaA"/>
    <property type="match status" value="1"/>
</dbReference>
<dbReference type="Pfam" id="PF08299">
    <property type="entry name" value="Bac_DnaA_C"/>
    <property type="match status" value="1"/>
</dbReference>
<dbReference type="Pfam" id="PF11638">
    <property type="entry name" value="DnaA_N"/>
    <property type="match status" value="1"/>
</dbReference>
<dbReference type="PRINTS" id="PR00051">
    <property type="entry name" value="DNAA"/>
</dbReference>
<dbReference type="SMART" id="SM00382">
    <property type="entry name" value="AAA"/>
    <property type="match status" value="1"/>
</dbReference>
<dbReference type="SMART" id="SM00760">
    <property type="entry name" value="Bac_DnaA_C"/>
    <property type="match status" value="1"/>
</dbReference>
<dbReference type="SUPFAM" id="SSF52540">
    <property type="entry name" value="P-loop containing nucleoside triphosphate hydrolases"/>
    <property type="match status" value="1"/>
</dbReference>
<dbReference type="SUPFAM" id="SSF48295">
    <property type="entry name" value="TrpR-like"/>
    <property type="match status" value="1"/>
</dbReference>
<dbReference type="PROSITE" id="PS01008">
    <property type="entry name" value="DNAA"/>
    <property type="match status" value="1"/>
</dbReference>
<reference key="1">
    <citation type="journal article" date="2008" name="PLoS Genet.">
        <title>Complete genome sequence of the N2-fixing broad host range endophyte Klebsiella pneumoniae 342 and virulence predictions verified in mice.</title>
        <authorList>
            <person name="Fouts D.E."/>
            <person name="Tyler H.L."/>
            <person name="DeBoy R.T."/>
            <person name="Daugherty S."/>
            <person name="Ren Q."/>
            <person name="Badger J.H."/>
            <person name="Durkin A.S."/>
            <person name="Huot H."/>
            <person name="Shrivastava S."/>
            <person name="Kothari S."/>
            <person name="Dodson R.J."/>
            <person name="Mohamoud Y."/>
            <person name="Khouri H."/>
            <person name="Roesch L.F.W."/>
            <person name="Krogfelt K.A."/>
            <person name="Struve C."/>
            <person name="Triplett E.W."/>
            <person name="Methe B.A."/>
        </authorList>
    </citation>
    <scope>NUCLEOTIDE SEQUENCE [LARGE SCALE GENOMIC DNA]</scope>
    <source>
        <strain>342</strain>
    </source>
</reference>
<proteinExistence type="inferred from homology"/>